<dbReference type="EC" id="3.6.1.-" evidence="1"/>
<dbReference type="EMBL" id="CP000036">
    <property type="protein sequence ID" value="ABB66566.1"/>
    <property type="status" value="ALT_INIT"/>
    <property type="molecule type" value="Genomic_DNA"/>
</dbReference>
<dbReference type="SMR" id="Q31ZE2"/>
<dbReference type="KEGG" id="sbo:SBO_1976"/>
<dbReference type="HOGENOM" id="CLU_040416_1_0_6"/>
<dbReference type="Proteomes" id="UP000007067">
    <property type="component" value="Chromosome"/>
</dbReference>
<dbReference type="GO" id="GO:0005737">
    <property type="term" value="C:cytoplasm"/>
    <property type="evidence" value="ECO:0007669"/>
    <property type="project" value="UniProtKB-SubCell"/>
</dbReference>
<dbReference type="GO" id="GO:0047429">
    <property type="term" value="F:nucleoside triphosphate diphosphatase activity"/>
    <property type="evidence" value="ECO:0007669"/>
    <property type="project" value="InterPro"/>
</dbReference>
<dbReference type="GO" id="GO:0009117">
    <property type="term" value="P:nucleotide metabolic process"/>
    <property type="evidence" value="ECO:0007669"/>
    <property type="project" value="UniProtKB-KW"/>
</dbReference>
<dbReference type="CDD" id="cd00555">
    <property type="entry name" value="Maf"/>
    <property type="match status" value="1"/>
</dbReference>
<dbReference type="FunFam" id="3.90.950.10:FF:000005">
    <property type="entry name" value="7-methyl-GTP pyrophosphatase"/>
    <property type="match status" value="1"/>
</dbReference>
<dbReference type="Gene3D" id="3.90.950.10">
    <property type="match status" value="1"/>
</dbReference>
<dbReference type="HAMAP" id="MF_00528">
    <property type="entry name" value="Maf"/>
    <property type="match status" value="1"/>
</dbReference>
<dbReference type="InterPro" id="IPR029001">
    <property type="entry name" value="ITPase-like_fam"/>
</dbReference>
<dbReference type="InterPro" id="IPR003697">
    <property type="entry name" value="Maf-like"/>
</dbReference>
<dbReference type="NCBIfam" id="TIGR00172">
    <property type="entry name" value="maf"/>
    <property type="match status" value="1"/>
</dbReference>
<dbReference type="PANTHER" id="PTHR43213:SF10">
    <property type="entry name" value="7-METHYL-GTP PYROPHOSPHATASE"/>
    <property type="match status" value="1"/>
</dbReference>
<dbReference type="PANTHER" id="PTHR43213">
    <property type="entry name" value="BIFUNCTIONAL DTTP/UTP PYROPHOSPHATASE/METHYLTRANSFERASE PROTEIN-RELATED"/>
    <property type="match status" value="1"/>
</dbReference>
<dbReference type="Pfam" id="PF02545">
    <property type="entry name" value="Maf"/>
    <property type="match status" value="1"/>
</dbReference>
<dbReference type="PIRSF" id="PIRSF006305">
    <property type="entry name" value="Maf"/>
    <property type="match status" value="1"/>
</dbReference>
<dbReference type="SUPFAM" id="SSF52972">
    <property type="entry name" value="ITPase-like"/>
    <property type="match status" value="1"/>
</dbReference>
<evidence type="ECO:0000255" key="1">
    <source>
        <dbReference type="HAMAP-Rule" id="MF_00528"/>
    </source>
</evidence>
<evidence type="ECO:0000305" key="2"/>
<sequence length="194" mass="21707">MPKLILASTSPWRRALLEKLQISFECAAPEVDETPRSDESPRQLVLRLAQEKAQSLASRYPDHLIIGSDQVCVLDGEITGKPLTEENARLQLRKASGNIVTFYTGLALFNSANGHLQTEVEPFDVHFRHLCEAEIDNYVRKEHPLHCAGSFKSEGFGITLFERLEGRDPNTLVGLPLIALCQMLRREGKNPLMG</sequence>
<protein>
    <recommendedName>
        <fullName evidence="1">7-methyl-GTP pyrophosphatase</fullName>
        <shortName evidence="1">m(7)GTP pyrophosphatase</shortName>
        <ecNumber evidence="1">3.6.1.-</ecNumber>
    </recommendedName>
</protein>
<reference key="1">
    <citation type="journal article" date="2005" name="Nucleic Acids Res.">
        <title>Genome dynamics and diversity of Shigella species, the etiologic agents of bacillary dysentery.</title>
        <authorList>
            <person name="Yang F."/>
            <person name="Yang J."/>
            <person name="Zhang X."/>
            <person name="Chen L."/>
            <person name="Jiang Y."/>
            <person name="Yan Y."/>
            <person name="Tang X."/>
            <person name="Wang J."/>
            <person name="Xiong Z."/>
            <person name="Dong J."/>
            <person name="Xue Y."/>
            <person name="Zhu Y."/>
            <person name="Xu X."/>
            <person name="Sun L."/>
            <person name="Chen S."/>
            <person name="Nie H."/>
            <person name="Peng J."/>
            <person name="Xu J."/>
            <person name="Wang Y."/>
            <person name="Yuan Z."/>
            <person name="Wen Y."/>
            <person name="Yao Z."/>
            <person name="Shen Y."/>
            <person name="Qiang B."/>
            <person name="Hou Y."/>
            <person name="Yu J."/>
            <person name="Jin Q."/>
        </authorList>
    </citation>
    <scope>NUCLEOTIDE SEQUENCE [LARGE SCALE GENOMIC DNA]</scope>
    <source>
        <strain>Sb227</strain>
    </source>
</reference>
<accession>Q31ZE2</accession>
<gene>
    <name type="primary">yceF1</name>
    <name type="ordered locus">SBO_1976</name>
</gene>
<keyword id="KW-0963">Cytoplasm</keyword>
<keyword id="KW-0378">Hydrolase</keyword>
<keyword id="KW-0546">Nucleotide metabolism</keyword>
<organism>
    <name type="scientific">Shigella boydii serotype 4 (strain Sb227)</name>
    <dbReference type="NCBI Taxonomy" id="300268"/>
    <lineage>
        <taxon>Bacteria</taxon>
        <taxon>Pseudomonadati</taxon>
        <taxon>Pseudomonadota</taxon>
        <taxon>Gammaproteobacteria</taxon>
        <taxon>Enterobacterales</taxon>
        <taxon>Enterobacteriaceae</taxon>
        <taxon>Shigella</taxon>
    </lineage>
</organism>
<comment type="function">
    <text evidence="1">Nucleoside triphosphate pyrophosphatase that hydrolyzes 7-methyl-GTP (m(7)GTP). May have a dual role in cell division arrest and in preventing the incorporation of modified nucleotides into cellular nucleic acids.</text>
</comment>
<comment type="catalytic activity">
    <reaction evidence="1">
        <text>N(7)-methyl-GTP + H2O = N(7)-methyl-GMP + diphosphate + H(+)</text>
        <dbReference type="Rhea" id="RHEA:58744"/>
        <dbReference type="ChEBI" id="CHEBI:15377"/>
        <dbReference type="ChEBI" id="CHEBI:15378"/>
        <dbReference type="ChEBI" id="CHEBI:33019"/>
        <dbReference type="ChEBI" id="CHEBI:58285"/>
        <dbReference type="ChEBI" id="CHEBI:87133"/>
    </reaction>
</comment>
<comment type="cofactor">
    <cofactor evidence="1">
        <name>a divalent metal cation</name>
        <dbReference type="ChEBI" id="CHEBI:60240"/>
    </cofactor>
</comment>
<comment type="subcellular location">
    <subcellularLocation>
        <location evidence="1">Cytoplasm</location>
    </subcellularLocation>
</comment>
<comment type="similarity">
    <text evidence="1">Belongs to the Maf family. YceF subfamily.</text>
</comment>
<comment type="sequence caution" evidence="2">
    <conflict type="erroneous initiation">
        <sequence resource="EMBL-CDS" id="ABB66566"/>
    </conflict>
</comment>
<name>NTPPB_SHIBS</name>
<proteinExistence type="inferred from homology"/>
<feature type="chain" id="PRO_0000267431" description="7-methyl-GTP pyrophosphatase">
    <location>
        <begin position="1"/>
        <end position="194"/>
    </location>
</feature>
<feature type="active site" description="Proton acceptor" evidence="1">
    <location>
        <position position="69"/>
    </location>
</feature>
<feature type="site" description="Important for substrate specificity" evidence="1">
    <location>
        <position position="12"/>
    </location>
</feature>
<feature type="site" description="Important for substrate specificity" evidence="1">
    <location>
        <position position="70"/>
    </location>
</feature>
<feature type="site" description="Important for substrate specificity" evidence="1">
    <location>
        <position position="154"/>
    </location>
</feature>